<keyword id="KW-0998">Cell outer membrane</keyword>
<keyword id="KW-0406">Ion transport</keyword>
<keyword id="KW-0472">Membrane</keyword>
<keyword id="KW-0626">Porin</keyword>
<keyword id="KW-1185">Reference proteome</keyword>
<keyword id="KW-0732">Signal</keyword>
<keyword id="KW-0812">Transmembrane</keyword>
<keyword id="KW-1134">Transmembrane beta strand</keyword>
<keyword id="KW-0813">Transport</keyword>
<proteinExistence type="inferred from homology"/>
<comment type="function">
    <text evidence="1 4">Plays an important role in the structural organization and integrity of the cell envelope, bridging the outer membrane to the peptidoglyan layer. Appears to be a nonselective channel.</text>
</comment>
<comment type="subunit">
    <text evidence="1">Homotrimer.</text>
</comment>
<comment type="subcellular location">
    <subcellularLocation>
        <location evidence="1">Cell outer membrane</location>
        <topology evidence="1">Multi-pass membrane protein</topology>
    </subcellularLocation>
</comment>
<comment type="domain">
    <text evidence="1 4">Exhibits a tripartite organization, with its C-terminal part forming a homotrimeric 28-stranded OM beta-barrel (OMBB), its central part forming a long trimeric coiled coil that can traverse the large periplasmic space, and the extreme N-terminal part forming an SLH domain trimer that can interact with the PG layer.</text>
</comment>
<evidence type="ECO:0000250" key="1">
    <source>
        <dbReference type="UniProtKB" id="Q9RRB6"/>
    </source>
</evidence>
<evidence type="ECO:0000255" key="2"/>
<evidence type="ECO:0000255" key="3">
    <source>
        <dbReference type="PROSITE-ProRule" id="PRU00777"/>
    </source>
</evidence>
<evidence type="ECO:0000305" key="4">
    <source>
    </source>
</evidence>
<accession>Q5SH37</accession>
<feature type="signal peptide" evidence="2">
    <location>
        <begin position="1"/>
        <end position="23"/>
    </location>
</feature>
<feature type="chain" id="PRO_0000032640" description="Outer membrane protein SlpA">
    <location>
        <begin position="24"/>
        <end position="928"/>
    </location>
</feature>
<feature type="domain" description="SLH" evidence="3">
    <location>
        <begin position="24"/>
        <end position="84"/>
    </location>
</feature>
<sequence length="928" mass="98037">MKKRLVTLLAGLLTVLSMGFGLAQFSDVPAGHWAKEAVEALAAKGIILGFPDGTFRGNENLTRYQAALLIYRLLQQIEEELKTQGTSPTMEALAPEDLEALKNAVQELAAELASLGVRVSALEDSAATKEDIARLEAMIAELKAQPMPEPGMDQAALKDLMDRVEAASIAADTALAQAQQLAERLDALAQDVEGVKGDLAGLRSQVEANADAIQALNELAVLLNQDVLSLQDRVTALEKMVSGGQELPDLEQFATKEDVAAVQEFAAALRSDLVGLSDKVSKLEEQVAELNKVRYSISGSLSATYGTVVTDTGTNFDIDRLFPGNAFSTGTYGSFSSSVQAGDSNQGNISGGSASLTFGVKVAQPGTSGVNVSEASATLQVPAAFGTAYTSAPTIRLNAASVKGNVDGQAFSVVYSRAVSSFKFNDYLFANDNDSEPANPRQGMVATFSATKFPLAPEVTVVAGVAGPDATKDTAPALNGNYFGIRTAVKPFSALNLALNYATNLGNRSAIGVDGGLELGPAKLSGLWVSSQTPGSPFADFFDNTLSDWAYYAQAEAKLGPLSLSANYHAVDPQYADGQAGMSENEDTTYYGGEKAGAPYGADTRGLGVSASVGFGPVTLKGYAESEGDYNLAPGSVNDAWGVAATLGSFRGFSLTGFYNAAYTGGNGYFSLTTAVDAIAPGVTYYYTIENQKYSSSWGVRVAHDGKAEDALIPTLNLTAQYATYYVSGHTDIQVYADLAKPFKLAILSLSPGFRYHSFAGAGSAPTYTTLKGGVQVSTDPLLFGLSLDGAVSYRRTQYTNNPSNVTTYELYYRAGVKLQDFLAPKLNFSVAYAHYEGDQLAGTGLPVVGSGNQAFNFARDRVYRSPDPIAAPWLATPGTQAGKLDGFYIEAKYYDLTVAYGEFVLDDLNGTNPNFGRGFKISYTVKF</sequence>
<protein>
    <recommendedName>
        <fullName evidence="4">Outer membrane protein SlpA</fullName>
    </recommendedName>
    <alternativeName>
        <fullName>P100 protein</fullName>
    </alternativeName>
</protein>
<name>SLAP1_THET8</name>
<dbReference type="EMBL" id="AP008226">
    <property type="protein sequence ID" value="BAD71716.1"/>
    <property type="molecule type" value="Genomic_DNA"/>
</dbReference>
<dbReference type="RefSeq" id="WP_011228992.1">
    <property type="nucleotide sequence ID" value="NC_006461.1"/>
</dbReference>
<dbReference type="RefSeq" id="YP_145159.1">
    <property type="nucleotide sequence ID" value="NC_006461.1"/>
</dbReference>
<dbReference type="SMR" id="Q5SH37"/>
<dbReference type="EnsemblBacteria" id="BAD71716">
    <property type="protein sequence ID" value="BAD71716"/>
    <property type="gene ID" value="BAD71716"/>
</dbReference>
<dbReference type="GeneID" id="3168016"/>
<dbReference type="KEGG" id="ttj:TTHA1893"/>
<dbReference type="PATRIC" id="fig|300852.9.peg.1860"/>
<dbReference type="eggNOG" id="COG0497">
    <property type="taxonomic scope" value="Bacteria"/>
</dbReference>
<dbReference type="HOGENOM" id="CLU_310736_0_0_0"/>
<dbReference type="Proteomes" id="UP000000532">
    <property type="component" value="Chromosome"/>
</dbReference>
<dbReference type="GO" id="GO:0009279">
    <property type="term" value="C:cell outer membrane"/>
    <property type="evidence" value="ECO:0007669"/>
    <property type="project" value="UniProtKB-SubCell"/>
</dbReference>
<dbReference type="GO" id="GO:0046930">
    <property type="term" value="C:pore complex"/>
    <property type="evidence" value="ECO:0007669"/>
    <property type="project" value="UniProtKB-KW"/>
</dbReference>
<dbReference type="GO" id="GO:0015288">
    <property type="term" value="F:porin activity"/>
    <property type="evidence" value="ECO:0007669"/>
    <property type="project" value="UniProtKB-KW"/>
</dbReference>
<dbReference type="GO" id="GO:0006811">
    <property type="term" value="P:monoatomic ion transport"/>
    <property type="evidence" value="ECO:0007669"/>
    <property type="project" value="UniProtKB-KW"/>
</dbReference>
<dbReference type="Gene3D" id="1.10.287.1490">
    <property type="match status" value="1"/>
</dbReference>
<dbReference type="InterPro" id="IPR051465">
    <property type="entry name" value="Cell_Envelope_Struct_Comp"/>
</dbReference>
<dbReference type="InterPro" id="IPR001119">
    <property type="entry name" value="SLH_dom"/>
</dbReference>
<dbReference type="InterPro" id="IPR048736">
    <property type="entry name" value="SlpA_C"/>
</dbReference>
<dbReference type="PANTHER" id="PTHR43308:SF1">
    <property type="entry name" value="OUTER MEMBRANE PROTEIN ALPHA"/>
    <property type="match status" value="1"/>
</dbReference>
<dbReference type="PANTHER" id="PTHR43308">
    <property type="entry name" value="OUTER MEMBRANE PROTEIN ALPHA-RELATED"/>
    <property type="match status" value="1"/>
</dbReference>
<dbReference type="Pfam" id="PF00395">
    <property type="entry name" value="SLH"/>
    <property type="match status" value="1"/>
</dbReference>
<dbReference type="Pfam" id="PF21620">
    <property type="entry name" value="SlpA_C"/>
    <property type="match status" value="1"/>
</dbReference>
<dbReference type="PROSITE" id="PS51272">
    <property type="entry name" value="SLH"/>
    <property type="match status" value="1"/>
</dbReference>
<gene>
    <name type="primary">slpA</name>
    <name type="ordered locus">TTHA1893</name>
</gene>
<organism>
    <name type="scientific">Thermus thermophilus (strain ATCC 27634 / DSM 579 / HB8)</name>
    <dbReference type="NCBI Taxonomy" id="300852"/>
    <lineage>
        <taxon>Bacteria</taxon>
        <taxon>Thermotogati</taxon>
        <taxon>Deinococcota</taxon>
        <taxon>Deinococci</taxon>
        <taxon>Thermales</taxon>
        <taxon>Thermaceae</taxon>
        <taxon>Thermus</taxon>
    </lineage>
</organism>
<reference key="1">
    <citation type="submission" date="2004-11" db="EMBL/GenBank/DDBJ databases">
        <title>Complete genome sequence of Thermus thermophilus HB8.</title>
        <authorList>
            <person name="Masui R."/>
            <person name="Kurokawa K."/>
            <person name="Nakagawa N."/>
            <person name="Tokunaga F."/>
            <person name="Koyama Y."/>
            <person name="Shibata T."/>
            <person name="Oshima T."/>
            <person name="Yokoyama S."/>
            <person name="Yasunaga T."/>
            <person name="Kuramitsu S."/>
        </authorList>
    </citation>
    <scope>NUCLEOTIDE SEQUENCE [LARGE SCALE GENOMIC DNA]</scope>
    <source>
        <strain>ATCC 27634 / DSM 579 / HB8</strain>
    </source>
</reference>
<reference key="2">
    <citation type="journal article" date="2022" name="Proc. Natl. Acad. Sci. U.S.A.">
        <title>A multidomain connector links the outer membrane and cell wall in phylogenetically deep-branching bacteria.</title>
        <authorList>
            <person name="von Kugelgen A."/>
            <person name="van Dorst S."/>
            <person name="Alva V."/>
            <person name="Bharat T.A.M."/>
        </authorList>
    </citation>
    <scope>FUNCTION</scope>
    <scope>DOMAIN</scope>
</reference>